<accession>B4TE61</accession>
<proteinExistence type="inferred from homology"/>
<protein>
    <recommendedName>
        <fullName evidence="1">Protein RnfH</fullName>
    </recommendedName>
</protein>
<evidence type="ECO:0000255" key="1">
    <source>
        <dbReference type="HAMAP-Rule" id="MF_00460"/>
    </source>
</evidence>
<reference key="1">
    <citation type="journal article" date="2011" name="J. Bacteriol.">
        <title>Comparative genomics of 28 Salmonella enterica isolates: evidence for CRISPR-mediated adaptive sublineage evolution.</title>
        <authorList>
            <person name="Fricke W.F."/>
            <person name="Mammel M.K."/>
            <person name="McDermott P.F."/>
            <person name="Tartera C."/>
            <person name="White D.G."/>
            <person name="Leclerc J.E."/>
            <person name="Ravel J."/>
            <person name="Cebula T.A."/>
        </authorList>
    </citation>
    <scope>NUCLEOTIDE SEQUENCE [LARGE SCALE GENOMIC DNA]</scope>
    <source>
        <strain>SL476</strain>
    </source>
</reference>
<comment type="similarity">
    <text evidence="1">Belongs to the UPF0125 (RnfH) family.</text>
</comment>
<gene>
    <name evidence="1" type="primary">rnfH</name>
    <name type="ordered locus">SeHA_C2901</name>
</gene>
<dbReference type="EMBL" id="CP001120">
    <property type="protein sequence ID" value="ACF67429.1"/>
    <property type="molecule type" value="Genomic_DNA"/>
</dbReference>
<dbReference type="RefSeq" id="WP_001112990.1">
    <property type="nucleotide sequence ID" value="NC_011083.1"/>
</dbReference>
<dbReference type="SMR" id="B4TE61"/>
<dbReference type="KEGG" id="seh:SeHA_C2901"/>
<dbReference type="HOGENOM" id="CLU_150721_1_0_6"/>
<dbReference type="Proteomes" id="UP000001866">
    <property type="component" value="Chromosome"/>
</dbReference>
<dbReference type="Gene3D" id="3.10.20.280">
    <property type="entry name" value="RnfH-like"/>
    <property type="match status" value="1"/>
</dbReference>
<dbReference type="HAMAP" id="MF_00460">
    <property type="entry name" value="UPF0125_RnfH"/>
    <property type="match status" value="1"/>
</dbReference>
<dbReference type="InterPro" id="IPR016155">
    <property type="entry name" value="Mopterin_synth/thiamin_S_b"/>
</dbReference>
<dbReference type="InterPro" id="IPR005346">
    <property type="entry name" value="RnfH"/>
</dbReference>
<dbReference type="InterPro" id="IPR037021">
    <property type="entry name" value="RnfH_sf"/>
</dbReference>
<dbReference type="NCBIfam" id="NF002490">
    <property type="entry name" value="PRK01777.1"/>
    <property type="match status" value="1"/>
</dbReference>
<dbReference type="PANTHER" id="PTHR37483">
    <property type="entry name" value="UPF0125 PROTEIN RATB"/>
    <property type="match status" value="1"/>
</dbReference>
<dbReference type="PANTHER" id="PTHR37483:SF1">
    <property type="entry name" value="UPF0125 PROTEIN RATB"/>
    <property type="match status" value="1"/>
</dbReference>
<dbReference type="Pfam" id="PF03658">
    <property type="entry name" value="Ub-RnfH"/>
    <property type="match status" value="1"/>
</dbReference>
<dbReference type="SUPFAM" id="SSF54285">
    <property type="entry name" value="MoaD/ThiS"/>
    <property type="match status" value="1"/>
</dbReference>
<sequence length="96" mass="10806">MPDKLVVEVAYALPEKQYLQRVTLEEGATVEEAIRASGLLELRTDIDLAKNKVGIYSRPVKLTDTVQDGDRVEIYRPLIADPKALRRQRAEKSAGR</sequence>
<name>RNFH_SALHS</name>
<feature type="chain" id="PRO_1000200195" description="Protein RnfH">
    <location>
        <begin position="1"/>
        <end position="96"/>
    </location>
</feature>
<organism>
    <name type="scientific">Salmonella heidelberg (strain SL476)</name>
    <dbReference type="NCBI Taxonomy" id="454169"/>
    <lineage>
        <taxon>Bacteria</taxon>
        <taxon>Pseudomonadati</taxon>
        <taxon>Pseudomonadota</taxon>
        <taxon>Gammaproteobacteria</taxon>
        <taxon>Enterobacterales</taxon>
        <taxon>Enterobacteriaceae</taxon>
        <taxon>Salmonella</taxon>
    </lineage>
</organism>